<keyword id="KW-0687">Ribonucleoprotein</keyword>
<keyword id="KW-0689">Ribosomal protein</keyword>
<keyword id="KW-0694">RNA-binding</keyword>
<keyword id="KW-0699">rRNA-binding</keyword>
<keyword id="KW-0820">tRNA-binding</keyword>
<proteinExistence type="inferred from homology"/>
<feature type="chain" id="PRO_1000054567" description="Large ribosomal subunit protein uL16">
    <location>
        <begin position="1"/>
        <end position="138"/>
    </location>
</feature>
<feature type="region of interest" description="Disordered" evidence="2">
    <location>
        <begin position="1"/>
        <end position="22"/>
    </location>
</feature>
<feature type="compositionally biased region" description="Basic residues" evidence="2">
    <location>
        <begin position="1"/>
        <end position="13"/>
    </location>
</feature>
<protein>
    <recommendedName>
        <fullName evidence="1">Large ribosomal subunit protein uL16</fullName>
    </recommendedName>
    <alternativeName>
        <fullName evidence="3">50S ribosomal protein L16</fullName>
    </alternativeName>
</protein>
<accession>A1TJ14</accession>
<comment type="function">
    <text evidence="1">Binds 23S rRNA and is also seen to make contacts with the A and possibly P site tRNAs.</text>
</comment>
<comment type="subunit">
    <text evidence="1">Part of the 50S ribosomal subunit.</text>
</comment>
<comment type="similarity">
    <text evidence="1">Belongs to the universal ribosomal protein uL16 family.</text>
</comment>
<name>RL16_PARC0</name>
<gene>
    <name evidence="1" type="primary">rplP</name>
    <name type="ordered locus">Aave_0345</name>
</gene>
<dbReference type="EMBL" id="CP000512">
    <property type="protein sequence ID" value="ABM30952.1"/>
    <property type="molecule type" value="Genomic_DNA"/>
</dbReference>
<dbReference type="RefSeq" id="WP_011793529.1">
    <property type="nucleotide sequence ID" value="NC_008752.1"/>
</dbReference>
<dbReference type="SMR" id="A1TJ14"/>
<dbReference type="STRING" id="397945.Aave_0345"/>
<dbReference type="GeneID" id="79790150"/>
<dbReference type="KEGG" id="aav:Aave_0345"/>
<dbReference type="eggNOG" id="COG0197">
    <property type="taxonomic scope" value="Bacteria"/>
</dbReference>
<dbReference type="HOGENOM" id="CLU_078858_2_1_4"/>
<dbReference type="OrthoDB" id="9802589at2"/>
<dbReference type="Proteomes" id="UP000002596">
    <property type="component" value="Chromosome"/>
</dbReference>
<dbReference type="GO" id="GO:0022625">
    <property type="term" value="C:cytosolic large ribosomal subunit"/>
    <property type="evidence" value="ECO:0007669"/>
    <property type="project" value="TreeGrafter"/>
</dbReference>
<dbReference type="GO" id="GO:0019843">
    <property type="term" value="F:rRNA binding"/>
    <property type="evidence" value="ECO:0007669"/>
    <property type="project" value="UniProtKB-UniRule"/>
</dbReference>
<dbReference type="GO" id="GO:0003735">
    <property type="term" value="F:structural constituent of ribosome"/>
    <property type="evidence" value="ECO:0007669"/>
    <property type="project" value="InterPro"/>
</dbReference>
<dbReference type="GO" id="GO:0000049">
    <property type="term" value="F:tRNA binding"/>
    <property type="evidence" value="ECO:0007669"/>
    <property type="project" value="UniProtKB-KW"/>
</dbReference>
<dbReference type="GO" id="GO:0006412">
    <property type="term" value="P:translation"/>
    <property type="evidence" value="ECO:0007669"/>
    <property type="project" value="UniProtKB-UniRule"/>
</dbReference>
<dbReference type="CDD" id="cd01433">
    <property type="entry name" value="Ribosomal_L16_L10e"/>
    <property type="match status" value="1"/>
</dbReference>
<dbReference type="FunFam" id="3.90.1170.10:FF:000001">
    <property type="entry name" value="50S ribosomal protein L16"/>
    <property type="match status" value="1"/>
</dbReference>
<dbReference type="Gene3D" id="3.90.1170.10">
    <property type="entry name" value="Ribosomal protein L10e/L16"/>
    <property type="match status" value="1"/>
</dbReference>
<dbReference type="HAMAP" id="MF_01342">
    <property type="entry name" value="Ribosomal_uL16"/>
    <property type="match status" value="1"/>
</dbReference>
<dbReference type="InterPro" id="IPR047873">
    <property type="entry name" value="Ribosomal_uL16"/>
</dbReference>
<dbReference type="InterPro" id="IPR000114">
    <property type="entry name" value="Ribosomal_uL16_bact-type"/>
</dbReference>
<dbReference type="InterPro" id="IPR020798">
    <property type="entry name" value="Ribosomal_uL16_CS"/>
</dbReference>
<dbReference type="InterPro" id="IPR016180">
    <property type="entry name" value="Ribosomal_uL16_dom"/>
</dbReference>
<dbReference type="InterPro" id="IPR036920">
    <property type="entry name" value="Ribosomal_uL16_sf"/>
</dbReference>
<dbReference type="NCBIfam" id="TIGR01164">
    <property type="entry name" value="rplP_bact"/>
    <property type="match status" value="1"/>
</dbReference>
<dbReference type="PANTHER" id="PTHR12220">
    <property type="entry name" value="50S/60S RIBOSOMAL PROTEIN L16"/>
    <property type="match status" value="1"/>
</dbReference>
<dbReference type="PANTHER" id="PTHR12220:SF13">
    <property type="entry name" value="LARGE RIBOSOMAL SUBUNIT PROTEIN UL16M"/>
    <property type="match status" value="1"/>
</dbReference>
<dbReference type="Pfam" id="PF00252">
    <property type="entry name" value="Ribosomal_L16"/>
    <property type="match status" value="1"/>
</dbReference>
<dbReference type="PRINTS" id="PR00060">
    <property type="entry name" value="RIBOSOMALL16"/>
</dbReference>
<dbReference type="SUPFAM" id="SSF54686">
    <property type="entry name" value="Ribosomal protein L16p/L10e"/>
    <property type="match status" value="1"/>
</dbReference>
<dbReference type="PROSITE" id="PS00586">
    <property type="entry name" value="RIBOSOMAL_L16_1"/>
    <property type="match status" value="1"/>
</dbReference>
<organism>
    <name type="scientific">Paracidovorax citrulli (strain AAC00-1)</name>
    <name type="common">Acidovorax citrulli</name>
    <dbReference type="NCBI Taxonomy" id="397945"/>
    <lineage>
        <taxon>Bacteria</taxon>
        <taxon>Pseudomonadati</taxon>
        <taxon>Pseudomonadota</taxon>
        <taxon>Betaproteobacteria</taxon>
        <taxon>Burkholderiales</taxon>
        <taxon>Comamonadaceae</taxon>
        <taxon>Paracidovorax</taxon>
    </lineage>
</organism>
<reference key="1">
    <citation type="submission" date="2006-12" db="EMBL/GenBank/DDBJ databases">
        <title>Complete sequence of Acidovorax avenae subsp. citrulli AAC00-1.</title>
        <authorList>
            <person name="Copeland A."/>
            <person name="Lucas S."/>
            <person name="Lapidus A."/>
            <person name="Barry K."/>
            <person name="Detter J.C."/>
            <person name="Glavina del Rio T."/>
            <person name="Dalin E."/>
            <person name="Tice H."/>
            <person name="Pitluck S."/>
            <person name="Kiss H."/>
            <person name="Brettin T."/>
            <person name="Bruce D."/>
            <person name="Han C."/>
            <person name="Tapia R."/>
            <person name="Gilna P."/>
            <person name="Schmutz J."/>
            <person name="Larimer F."/>
            <person name="Land M."/>
            <person name="Hauser L."/>
            <person name="Kyrpides N."/>
            <person name="Kim E."/>
            <person name="Stahl D."/>
            <person name="Richardson P."/>
        </authorList>
    </citation>
    <scope>NUCLEOTIDE SEQUENCE [LARGE SCALE GENOMIC DNA]</scope>
    <source>
        <strain>AAC00-1</strain>
    </source>
</reference>
<evidence type="ECO:0000255" key="1">
    <source>
        <dbReference type="HAMAP-Rule" id="MF_01342"/>
    </source>
</evidence>
<evidence type="ECO:0000256" key="2">
    <source>
        <dbReference type="SAM" id="MobiDB-lite"/>
    </source>
</evidence>
<evidence type="ECO:0000305" key="3"/>
<sequence length="138" mass="15433">MLQPARRKYRKEQKGRNTGVATRGNSVAFGDFGLKCTDRGRLTARQIEAARRAISRHVKRGGRIWIRVFPDKPISTKPAEVRMGNGKGNPEYYVAEIQPGKIVFEIVGVPEELAREAFRLAAAKLPLRTTFVSRQIGA</sequence>